<dbReference type="EC" id="7.1.1.-"/>
<dbReference type="EMBL" id="CP000087">
    <property type="protein sequence ID" value="ABE05264.1"/>
    <property type="molecule type" value="Genomic_DNA"/>
</dbReference>
<dbReference type="RefSeq" id="WP_011477842.1">
    <property type="nucleotide sequence ID" value="NC_007940.1"/>
</dbReference>
<dbReference type="SMR" id="Q1RHA0"/>
<dbReference type="KEGG" id="rbe:RBE_1183"/>
<dbReference type="eggNOG" id="COG1894">
    <property type="taxonomic scope" value="Bacteria"/>
</dbReference>
<dbReference type="HOGENOM" id="CLU_014881_0_1_5"/>
<dbReference type="OrthoDB" id="9761899at2"/>
<dbReference type="Proteomes" id="UP000001951">
    <property type="component" value="Chromosome"/>
</dbReference>
<dbReference type="GO" id="GO:0051539">
    <property type="term" value="F:4 iron, 4 sulfur cluster binding"/>
    <property type="evidence" value="ECO:0007669"/>
    <property type="project" value="UniProtKB-KW"/>
</dbReference>
<dbReference type="GO" id="GO:0010181">
    <property type="term" value="F:FMN binding"/>
    <property type="evidence" value="ECO:0007669"/>
    <property type="project" value="InterPro"/>
</dbReference>
<dbReference type="GO" id="GO:0046872">
    <property type="term" value="F:metal ion binding"/>
    <property type="evidence" value="ECO:0007669"/>
    <property type="project" value="UniProtKB-KW"/>
</dbReference>
<dbReference type="GO" id="GO:0051287">
    <property type="term" value="F:NAD binding"/>
    <property type="evidence" value="ECO:0007669"/>
    <property type="project" value="InterPro"/>
</dbReference>
<dbReference type="GO" id="GO:0008137">
    <property type="term" value="F:NADH dehydrogenase (ubiquinone) activity"/>
    <property type="evidence" value="ECO:0007669"/>
    <property type="project" value="InterPro"/>
</dbReference>
<dbReference type="GO" id="GO:0048038">
    <property type="term" value="F:quinone binding"/>
    <property type="evidence" value="ECO:0007669"/>
    <property type="project" value="UniProtKB-KW"/>
</dbReference>
<dbReference type="FunFam" id="1.20.1440.230:FF:000001">
    <property type="entry name" value="Mitochondrial NADH dehydrogenase flavoprotein 1"/>
    <property type="match status" value="1"/>
</dbReference>
<dbReference type="FunFam" id="3.10.20.600:FF:000001">
    <property type="entry name" value="NADH dehydrogenase [ubiquinone] flavoprotein 1, mitochondrial"/>
    <property type="match status" value="1"/>
</dbReference>
<dbReference type="FunFam" id="3.40.50.11540:FF:000001">
    <property type="entry name" value="NADH dehydrogenase [ubiquinone] flavoprotein 1, mitochondrial"/>
    <property type="match status" value="1"/>
</dbReference>
<dbReference type="Gene3D" id="3.10.20.600">
    <property type="match status" value="1"/>
</dbReference>
<dbReference type="Gene3D" id="3.40.50.11540">
    <property type="entry name" value="NADH-ubiquinone oxidoreductase 51kDa subunit"/>
    <property type="match status" value="1"/>
</dbReference>
<dbReference type="Gene3D" id="1.20.1440.230">
    <property type="entry name" value="NADH-ubiquinone oxidoreductase 51kDa subunit, iron-sulphur binding domain"/>
    <property type="match status" value="1"/>
</dbReference>
<dbReference type="InterPro" id="IPR050837">
    <property type="entry name" value="ComplexI_51kDa_subunit"/>
</dbReference>
<dbReference type="InterPro" id="IPR001949">
    <property type="entry name" value="NADH-UbQ_OxRdtase_51kDa_CS"/>
</dbReference>
<dbReference type="InterPro" id="IPR011537">
    <property type="entry name" value="NADH-UbQ_OxRdtase_suF"/>
</dbReference>
<dbReference type="InterPro" id="IPR011538">
    <property type="entry name" value="Nuo51_FMN-bd"/>
</dbReference>
<dbReference type="InterPro" id="IPR037225">
    <property type="entry name" value="Nuo51_FMN-bd_sf"/>
</dbReference>
<dbReference type="InterPro" id="IPR019575">
    <property type="entry name" value="Nuop51_4Fe4S-bd"/>
</dbReference>
<dbReference type="InterPro" id="IPR037207">
    <property type="entry name" value="Nuop51_4Fe4S-bd_sf"/>
</dbReference>
<dbReference type="InterPro" id="IPR054765">
    <property type="entry name" value="SLBB_dom"/>
</dbReference>
<dbReference type="NCBIfam" id="TIGR01959">
    <property type="entry name" value="nuoF_fam"/>
    <property type="match status" value="1"/>
</dbReference>
<dbReference type="NCBIfam" id="NF010120">
    <property type="entry name" value="PRK13596.1"/>
    <property type="match status" value="1"/>
</dbReference>
<dbReference type="PANTHER" id="PTHR11780:SF10">
    <property type="entry name" value="NADH DEHYDROGENASE [UBIQUINONE] FLAVOPROTEIN 1, MITOCHONDRIAL"/>
    <property type="match status" value="1"/>
</dbReference>
<dbReference type="PANTHER" id="PTHR11780">
    <property type="entry name" value="NADH-UBIQUINONE OXIDOREDUCTASE FLAVOPROTEIN 1 NDUFV1"/>
    <property type="match status" value="1"/>
</dbReference>
<dbReference type="Pfam" id="PF01512">
    <property type="entry name" value="Complex1_51K"/>
    <property type="match status" value="1"/>
</dbReference>
<dbReference type="Pfam" id="PF10589">
    <property type="entry name" value="NADH_4Fe-4S"/>
    <property type="match status" value="1"/>
</dbReference>
<dbReference type="Pfam" id="PF22461">
    <property type="entry name" value="SLBB_2"/>
    <property type="match status" value="1"/>
</dbReference>
<dbReference type="SMART" id="SM00928">
    <property type="entry name" value="NADH_4Fe-4S"/>
    <property type="match status" value="1"/>
</dbReference>
<dbReference type="SUPFAM" id="SSF142019">
    <property type="entry name" value="Nqo1 FMN-binding domain-like"/>
    <property type="match status" value="1"/>
</dbReference>
<dbReference type="SUPFAM" id="SSF142984">
    <property type="entry name" value="Nqo1 middle domain-like"/>
    <property type="match status" value="1"/>
</dbReference>
<dbReference type="SUPFAM" id="SSF140490">
    <property type="entry name" value="Nqo1C-terminal domain-like"/>
    <property type="match status" value="1"/>
</dbReference>
<dbReference type="PROSITE" id="PS00644">
    <property type="entry name" value="COMPLEX1_51K_1"/>
    <property type="match status" value="1"/>
</dbReference>
<dbReference type="PROSITE" id="PS00645">
    <property type="entry name" value="COMPLEX1_51K_2"/>
    <property type="match status" value="1"/>
</dbReference>
<keyword id="KW-0004">4Fe-4S</keyword>
<keyword id="KW-0285">Flavoprotein</keyword>
<keyword id="KW-0288">FMN</keyword>
<keyword id="KW-0408">Iron</keyword>
<keyword id="KW-0411">Iron-sulfur</keyword>
<keyword id="KW-0479">Metal-binding</keyword>
<keyword id="KW-0520">NAD</keyword>
<keyword id="KW-0874">Quinone</keyword>
<keyword id="KW-1278">Translocase</keyword>
<protein>
    <recommendedName>
        <fullName>NADH-quinone oxidoreductase subunit F</fullName>
        <ecNumber>7.1.1.-</ecNumber>
    </recommendedName>
    <alternativeName>
        <fullName>NADH dehydrogenase I subunit F</fullName>
    </alternativeName>
    <alternativeName>
        <fullName>NDH-1 subunit F</fullName>
    </alternativeName>
</protein>
<evidence type="ECO:0000250" key="1"/>
<evidence type="ECO:0000255" key="2"/>
<evidence type="ECO:0000305" key="3"/>
<feature type="chain" id="PRO_0000274787" description="NADH-quinone oxidoreductase subunit F">
    <location>
        <begin position="1"/>
        <end position="417"/>
    </location>
</feature>
<feature type="binding site" evidence="1">
    <location>
        <begin position="54"/>
        <end position="63"/>
    </location>
    <ligand>
        <name>NAD(+)</name>
        <dbReference type="ChEBI" id="CHEBI:57540"/>
    </ligand>
</feature>
<feature type="binding site" evidence="1">
    <location>
        <begin position="166"/>
        <end position="213"/>
    </location>
    <ligand>
        <name>FMN</name>
        <dbReference type="ChEBI" id="CHEBI:58210"/>
    </ligand>
</feature>
<feature type="binding site" evidence="2">
    <location>
        <position position="345"/>
    </location>
    <ligand>
        <name>[4Fe-4S] cluster</name>
        <dbReference type="ChEBI" id="CHEBI:49883"/>
    </ligand>
</feature>
<feature type="binding site" evidence="2">
    <location>
        <position position="348"/>
    </location>
    <ligand>
        <name>[4Fe-4S] cluster</name>
        <dbReference type="ChEBI" id="CHEBI:49883"/>
    </ligand>
</feature>
<feature type="binding site" evidence="2">
    <location>
        <position position="351"/>
    </location>
    <ligand>
        <name>[4Fe-4S] cluster</name>
        <dbReference type="ChEBI" id="CHEBI:49883"/>
    </ligand>
</feature>
<feature type="binding site" evidence="2">
    <location>
        <position position="391"/>
    </location>
    <ligand>
        <name>[4Fe-4S] cluster</name>
        <dbReference type="ChEBI" id="CHEBI:49883"/>
    </ligand>
</feature>
<proteinExistence type="inferred from homology"/>
<organism>
    <name type="scientific">Rickettsia bellii (strain RML369-C)</name>
    <dbReference type="NCBI Taxonomy" id="336407"/>
    <lineage>
        <taxon>Bacteria</taxon>
        <taxon>Pseudomonadati</taxon>
        <taxon>Pseudomonadota</taxon>
        <taxon>Alphaproteobacteria</taxon>
        <taxon>Rickettsiales</taxon>
        <taxon>Rickettsiaceae</taxon>
        <taxon>Rickettsieae</taxon>
        <taxon>Rickettsia</taxon>
        <taxon>belli group</taxon>
    </lineage>
</organism>
<gene>
    <name type="primary">nuoF</name>
    <name type="ordered locus">RBE_1183</name>
</gene>
<accession>Q1RHA0</accession>
<name>NUOF_RICBR</name>
<reference key="1">
    <citation type="journal article" date="2006" name="PLoS Genet.">
        <title>Genome sequence of Rickettsia bellii illuminates the role of amoebae in gene exchanges between intracellular pathogens.</title>
        <authorList>
            <person name="Ogata H."/>
            <person name="La Scola B."/>
            <person name="Audic S."/>
            <person name="Renesto P."/>
            <person name="Blanc G."/>
            <person name="Robert C."/>
            <person name="Fournier P.-E."/>
            <person name="Claverie J.-M."/>
            <person name="Raoult D."/>
        </authorList>
    </citation>
    <scope>NUCLEOTIDE SEQUENCE [LARGE SCALE GENOMIC DNA]</scope>
    <source>
        <strain>RML369-C</strain>
    </source>
</reference>
<comment type="function">
    <text evidence="1">NDH-1 shuttles electrons from NADH, via FMN and iron-sulfur (Fe-S) centers, to quinones in the respiratory chain. Couples the redox reaction to proton translocation (for every two electrons transferred, four hydrogen ions are translocated across the cytoplasmic membrane), and thus conserves the redox energy in a proton gradient (By similarity).</text>
</comment>
<comment type="catalytic activity">
    <reaction>
        <text>a quinone + NADH + 5 H(+)(in) = a quinol + NAD(+) + 4 H(+)(out)</text>
        <dbReference type="Rhea" id="RHEA:57888"/>
        <dbReference type="ChEBI" id="CHEBI:15378"/>
        <dbReference type="ChEBI" id="CHEBI:24646"/>
        <dbReference type="ChEBI" id="CHEBI:57540"/>
        <dbReference type="ChEBI" id="CHEBI:57945"/>
        <dbReference type="ChEBI" id="CHEBI:132124"/>
    </reaction>
</comment>
<comment type="cofactor">
    <cofactor evidence="3">
        <name>FMN</name>
        <dbReference type="ChEBI" id="CHEBI:58210"/>
    </cofactor>
    <text evidence="3">Binds 1 FMN.</text>
</comment>
<comment type="cofactor">
    <cofactor evidence="3">
        <name>[4Fe-4S] cluster</name>
        <dbReference type="ChEBI" id="CHEBI:49883"/>
    </cofactor>
    <text evidence="3">Binds 1 [4Fe-4S] cluster.</text>
</comment>
<comment type="similarity">
    <text evidence="3">Belongs to the complex I 51 kDa subunit family.</text>
</comment>
<sequence>MLKKEDRIFTNLHGEQSHDLKSSKKLGDWDNTKALLNKGKEWIIEEVKKSGLRGRGGAGFSTGTKWSFMPKESKKPSYLVVNADESEPGTCKDRDILRYEPHKLIEGCLLASFAIGANSCYIYIRGEFYNEASNIQRALDEAYKDGLIGKNACGSGFNCDIYLHRGAGAYICGEETALLESLEGKKGMPRLKPPFPAGFGLYGCPTTINNVESIAVVPTILRRGASWFASIGKPNNTGTKIFCISGHVNKPCNVEEAMGIPLKEIIEKHAGGVRGGWDNLKAIIPGGSSVPLLPKSLCETADMDFDSLKAAGSSLGTGGIIVMDKSTDIIYAIARLSKFYMHESCGQCTPCREGTGWMWRVMMRLVKGDAKKSEIDQLLEVTKEIEGHTICALGDAAAWPIQGLIKHFRNEIESRIQ</sequence>